<sequence length="502" mass="57416">MAISFLCFCLITLASLIFFAKKIKHLKWNLPPSPPKFPVIGNLHQIGELPHRSLQHLAERYGPVMLLHFGFVPVTVVSSREAAEEVLRTHDLDCCSRPKLVGTRLLSRNFKDVCFTPYGNEWKARRKFALRELFCLKKVQSFRHIREEECNFLVKQLSESAVNRSPVDLSKSLFWLTASIFFRVALGQNFHESNFIDKEKIEELVFEAETALASFTCSDFFPVAGLGWLVDWFSGQHKRLNDVFYKLDALFQHVIDDHLNPGRSKEHEDIIDSMLDAIHKEGKDSSLELIIDHIKGFLANIFLAGIDTGALTMIWAMTELVKNPKLIKKVQGEIREQLGSNKARITEEDIDKVPYLKMVIKETFRLHPAAPLILPRETMAHIKVQGYDIPPKRRILVNVSAIGRDPKLWTNPEEFDPERFMDSSVDYRGQHYELLPFGSGRRICPGMPMGIAAVELGLLNLLYFFDWKLPDGMTHKDIDTEEAGTLTIVKKVPLQLVPVRVQ</sequence>
<organism>
    <name type="scientific">Arabidopsis thaliana</name>
    <name type="common">Mouse-ear cress</name>
    <dbReference type="NCBI Taxonomy" id="3702"/>
    <lineage>
        <taxon>Eukaryota</taxon>
        <taxon>Viridiplantae</taxon>
        <taxon>Streptophyta</taxon>
        <taxon>Embryophyta</taxon>
        <taxon>Tracheophyta</taxon>
        <taxon>Spermatophyta</taxon>
        <taxon>Magnoliopsida</taxon>
        <taxon>eudicotyledons</taxon>
        <taxon>Gunneridae</taxon>
        <taxon>Pentapetalae</taxon>
        <taxon>rosids</taxon>
        <taxon>malvids</taxon>
        <taxon>Brassicales</taxon>
        <taxon>Brassicaceae</taxon>
        <taxon>Camelineae</taxon>
        <taxon>Arabidopsis</taxon>
    </lineage>
</organism>
<feature type="chain" id="PRO_0000052097" description="Cytochrome P450 71B20">
    <location>
        <begin position="1"/>
        <end position="502"/>
    </location>
</feature>
<feature type="transmembrane region" description="Helical" evidence="2">
    <location>
        <begin position="1"/>
        <end position="21"/>
    </location>
</feature>
<feature type="binding site" description="axial binding residue" evidence="1">
    <location>
        <position position="444"/>
    </location>
    <ligand>
        <name>heme</name>
        <dbReference type="ChEBI" id="CHEBI:30413"/>
    </ligand>
    <ligandPart>
        <name>Fe</name>
        <dbReference type="ChEBI" id="CHEBI:18248"/>
    </ligandPart>
</feature>
<keyword id="KW-0025">Alternative splicing</keyword>
<keyword id="KW-0349">Heme</keyword>
<keyword id="KW-0408">Iron</keyword>
<keyword id="KW-0472">Membrane</keyword>
<keyword id="KW-0479">Metal-binding</keyword>
<keyword id="KW-0503">Monooxygenase</keyword>
<keyword id="KW-0560">Oxidoreductase</keyword>
<keyword id="KW-1185">Reference proteome</keyword>
<keyword id="KW-0812">Transmembrane</keyword>
<keyword id="KW-1133">Transmembrane helix</keyword>
<evidence type="ECO:0000250" key="1"/>
<evidence type="ECO:0000255" key="2"/>
<evidence type="ECO:0000305" key="3"/>
<protein>
    <recommendedName>
        <fullName>Cytochrome P450 71B20</fullName>
        <ecNumber>1.14.-.-</ecNumber>
    </recommendedName>
</protein>
<proteinExistence type="evidence at transcript level"/>
<reference key="1">
    <citation type="journal article" date="2000" name="DNA Res.">
        <title>Structural analysis of Arabidopsis thaliana chromosome 3. I. Sequence features of the regions of 4,504,864 bp covered by sixty P1 and TAC clones.</title>
        <authorList>
            <person name="Sato S."/>
            <person name="Nakamura Y."/>
            <person name="Kaneko T."/>
            <person name="Katoh T."/>
            <person name="Asamizu E."/>
            <person name="Tabata S."/>
        </authorList>
    </citation>
    <scope>NUCLEOTIDE SEQUENCE [LARGE SCALE GENOMIC DNA]</scope>
    <source>
        <strain>cv. Columbia</strain>
    </source>
</reference>
<reference key="2">
    <citation type="journal article" date="2017" name="Plant J.">
        <title>Araport11: a complete reannotation of the Arabidopsis thaliana reference genome.</title>
        <authorList>
            <person name="Cheng C.Y."/>
            <person name="Krishnakumar V."/>
            <person name="Chan A.P."/>
            <person name="Thibaud-Nissen F."/>
            <person name="Schobel S."/>
            <person name="Town C.D."/>
        </authorList>
    </citation>
    <scope>GENOME REANNOTATION</scope>
    <source>
        <strain>cv. Columbia</strain>
    </source>
</reference>
<reference key="3">
    <citation type="journal article" date="2003" name="Science">
        <title>Empirical analysis of transcriptional activity in the Arabidopsis genome.</title>
        <authorList>
            <person name="Yamada K."/>
            <person name="Lim J."/>
            <person name="Dale J.M."/>
            <person name="Chen H."/>
            <person name="Shinn P."/>
            <person name="Palm C.J."/>
            <person name="Southwick A.M."/>
            <person name="Wu H.C."/>
            <person name="Kim C.J."/>
            <person name="Nguyen M."/>
            <person name="Pham P.K."/>
            <person name="Cheuk R.F."/>
            <person name="Karlin-Newmann G."/>
            <person name="Liu S.X."/>
            <person name="Lam B."/>
            <person name="Sakano H."/>
            <person name="Wu T."/>
            <person name="Yu G."/>
            <person name="Miranda M."/>
            <person name="Quach H.L."/>
            <person name="Tripp M."/>
            <person name="Chang C.H."/>
            <person name="Lee J.M."/>
            <person name="Toriumi M.J."/>
            <person name="Chan M.M."/>
            <person name="Tang C.C."/>
            <person name="Onodera C.S."/>
            <person name="Deng J.M."/>
            <person name="Akiyama K."/>
            <person name="Ansari Y."/>
            <person name="Arakawa T."/>
            <person name="Banh J."/>
            <person name="Banno F."/>
            <person name="Bowser L."/>
            <person name="Brooks S.Y."/>
            <person name="Carninci P."/>
            <person name="Chao Q."/>
            <person name="Choy N."/>
            <person name="Enju A."/>
            <person name="Goldsmith A.D."/>
            <person name="Gurjal M."/>
            <person name="Hansen N.F."/>
            <person name="Hayashizaki Y."/>
            <person name="Johnson-Hopson C."/>
            <person name="Hsuan V.W."/>
            <person name="Iida K."/>
            <person name="Karnes M."/>
            <person name="Khan S."/>
            <person name="Koesema E."/>
            <person name="Ishida J."/>
            <person name="Jiang P.X."/>
            <person name="Jones T."/>
            <person name="Kawai J."/>
            <person name="Kamiya A."/>
            <person name="Meyers C."/>
            <person name="Nakajima M."/>
            <person name="Narusaka M."/>
            <person name="Seki M."/>
            <person name="Sakurai T."/>
            <person name="Satou M."/>
            <person name="Tamse R."/>
            <person name="Vaysberg M."/>
            <person name="Wallender E.K."/>
            <person name="Wong C."/>
            <person name="Yamamura Y."/>
            <person name="Yuan S."/>
            <person name="Shinozaki K."/>
            <person name="Davis R.W."/>
            <person name="Theologis A."/>
            <person name="Ecker J.R."/>
        </authorList>
    </citation>
    <scope>NUCLEOTIDE SEQUENCE [LARGE SCALE MRNA]</scope>
    <source>
        <strain>cv. Columbia</strain>
    </source>
</reference>
<gene>
    <name type="primary">CYP71B20</name>
    <name type="ordered locus">At3g26180</name>
    <name type="ORF">MTC11.9</name>
</gene>
<dbReference type="EC" id="1.14.-.-"/>
<dbReference type="EMBL" id="AB024038">
    <property type="protein sequence ID" value="BAB02439.1"/>
    <property type="molecule type" value="Genomic_DNA"/>
</dbReference>
<dbReference type="EMBL" id="CP002686">
    <property type="protein sequence ID" value="AEE77130.1"/>
    <property type="molecule type" value="Genomic_DNA"/>
</dbReference>
<dbReference type="EMBL" id="AY056270">
    <property type="protein sequence ID" value="AAL07119.1"/>
    <property type="molecule type" value="mRNA"/>
</dbReference>
<dbReference type="EMBL" id="AY143938">
    <property type="protein sequence ID" value="AAN28877.1"/>
    <property type="molecule type" value="mRNA"/>
</dbReference>
<dbReference type="RefSeq" id="NP_189249.1">
    <molecule id="Q9LTM3-1"/>
    <property type="nucleotide sequence ID" value="NM_113525.4"/>
</dbReference>
<dbReference type="SMR" id="Q9LTM3"/>
<dbReference type="FunCoup" id="Q9LTM3">
    <property type="interactions" value="403"/>
</dbReference>
<dbReference type="IntAct" id="Q9LTM3">
    <property type="interactions" value="1"/>
</dbReference>
<dbReference type="STRING" id="3702.Q9LTM3"/>
<dbReference type="PaxDb" id="3702-AT3G26180.1"/>
<dbReference type="ProteomicsDB" id="239167">
    <molecule id="Q9LTM3-1"/>
</dbReference>
<dbReference type="EnsemblPlants" id="AT3G26180.1">
    <molecule id="Q9LTM3-1"/>
    <property type="protein sequence ID" value="AT3G26180.1"/>
    <property type="gene ID" value="AT3G26180"/>
</dbReference>
<dbReference type="GeneID" id="822219"/>
<dbReference type="Gramene" id="AT3G26180.1">
    <molecule id="Q9LTM3-1"/>
    <property type="protein sequence ID" value="AT3G26180.1"/>
    <property type="gene ID" value="AT3G26180"/>
</dbReference>
<dbReference type="KEGG" id="ath:AT3G26180"/>
<dbReference type="Araport" id="AT3G26180"/>
<dbReference type="TAIR" id="AT3G26180">
    <property type="gene designation" value="CYP71B20"/>
</dbReference>
<dbReference type="eggNOG" id="KOG0156">
    <property type="taxonomic scope" value="Eukaryota"/>
</dbReference>
<dbReference type="InParanoid" id="Q9LTM3"/>
<dbReference type="OMA" id="HESNFID"/>
<dbReference type="PhylomeDB" id="Q9LTM3"/>
<dbReference type="BioCyc" id="ARA:AT3G26180-MONOMER"/>
<dbReference type="PRO" id="PR:Q9LTM3"/>
<dbReference type="Proteomes" id="UP000006548">
    <property type="component" value="Chromosome 3"/>
</dbReference>
<dbReference type="ExpressionAtlas" id="Q9LTM3">
    <property type="expression patterns" value="baseline and differential"/>
</dbReference>
<dbReference type="GO" id="GO:0016020">
    <property type="term" value="C:membrane"/>
    <property type="evidence" value="ECO:0007669"/>
    <property type="project" value="UniProtKB-SubCell"/>
</dbReference>
<dbReference type="GO" id="GO:0020037">
    <property type="term" value="F:heme binding"/>
    <property type="evidence" value="ECO:0007669"/>
    <property type="project" value="InterPro"/>
</dbReference>
<dbReference type="GO" id="GO:0005506">
    <property type="term" value="F:iron ion binding"/>
    <property type="evidence" value="ECO:0007669"/>
    <property type="project" value="InterPro"/>
</dbReference>
<dbReference type="GO" id="GO:0004497">
    <property type="term" value="F:monooxygenase activity"/>
    <property type="evidence" value="ECO:0007669"/>
    <property type="project" value="UniProtKB-KW"/>
</dbReference>
<dbReference type="GO" id="GO:0016705">
    <property type="term" value="F:oxidoreductase activity, acting on paired donors, with incorporation or reduction of molecular oxygen"/>
    <property type="evidence" value="ECO:0007669"/>
    <property type="project" value="InterPro"/>
</dbReference>
<dbReference type="CDD" id="cd11072">
    <property type="entry name" value="CYP71-like"/>
    <property type="match status" value="1"/>
</dbReference>
<dbReference type="FunFam" id="1.10.630.10:FF:000011">
    <property type="entry name" value="Cytochrome P450 83B1"/>
    <property type="match status" value="1"/>
</dbReference>
<dbReference type="Gene3D" id="1.10.630.10">
    <property type="entry name" value="Cytochrome P450"/>
    <property type="match status" value="1"/>
</dbReference>
<dbReference type="InterPro" id="IPR001128">
    <property type="entry name" value="Cyt_P450"/>
</dbReference>
<dbReference type="InterPro" id="IPR017972">
    <property type="entry name" value="Cyt_P450_CS"/>
</dbReference>
<dbReference type="InterPro" id="IPR002401">
    <property type="entry name" value="Cyt_P450_E_grp-I"/>
</dbReference>
<dbReference type="InterPro" id="IPR036396">
    <property type="entry name" value="Cyt_P450_sf"/>
</dbReference>
<dbReference type="PANTHER" id="PTHR47955:SF19">
    <property type="entry name" value="CYTOCHROME P450 71A9-LIKE ISOFORM X1"/>
    <property type="match status" value="1"/>
</dbReference>
<dbReference type="PANTHER" id="PTHR47955">
    <property type="entry name" value="CYTOCHROME P450 FAMILY 71 PROTEIN"/>
    <property type="match status" value="1"/>
</dbReference>
<dbReference type="Pfam" id="PF00067">
    <property type="entry name" value="p450"/>
    <property type="match status" value="1"/>
</dbReference>
<dbReference type="PRINTS" id="PR00463">
    <property type="entry name" value="EP450I"/>
</dbReference>
<dbReference type="PRINTS" id="PR00385">
    <property type="entry name" value="P450"/>
</dbReference>
<dbReference type="SUPFAM" id="SSF48264">
    <property type="entry name" value="Cytochrome P450"/>
    <property type="match status" value="1"/>
</dbReference>
<dbReference type="PROSITE" id="PS00086">
    <property type="entry name" value="CYTOCHROME_P450"/>
    <property type="match status" value="1"/>
</dbReference>
<comment type="cofactor">
    <cofactor evidence="1">
        <name>heme</name>
        <dbReference type="ChEBI" id="CHEBI:30413"/>
    </cofactor>
</comment>
<comment type="subcellular location">
    <subcellularLocation>
        <location evidence="3">Membrane</location>
        <topology evidence="3">Single-pass membrane protein</topology>
    </subcellularLocation>
</comment>
<comment type="alternative products">
    <event type="alternative splicing"/>
    <isoform>
        <id>Q9LTM3-1</id>
        <name>1</name>
        <sequence type="displayed"/>
    </isoform>
    <text>A number of isoforms are produced. According to EST sequences.</text>
</comment>
<comment type="similarity">
    <text evidence="3">Belongs to the cytochrome P450 family.</text>
</comment>
<accession>Q9LTM3</accession>
<name>C71BK_ARATH</name>